<name>ACYP2_RALN1</name>
<proteinExistence type="inferred from homology"/>
<gene>
    <name type="primary">acyP2</name>
    <name type="ordered locus">RSc3370</name>
</gene>
<reference key="1">
    <citation type="journal article" date="2002" name="Nature">
        <title>Genome sequence of the plant pathogen Ralstonia solanacearum.</title>
        <authorList>
            <person name="Salanoubat M."/>
            <person name="Genin S."/>
            <person name="Artiguenave F."/>
            <person name="Gouzy J."/>
            <person name="Mangenot S."/>
            <person name="Arlat M."/>
            <person name="Billault A."/>
            <person name="Brottier P."/>
            <person name="Camus J.-C."/>
            <person name="Cattolico L."/>
            <person name="Chandler M."/>
            <person name="Choisne N."/>
            <person name="Claudel-Renard C."/>
            <person name="Cunnac S."/>
            <person name="Demange N."/>
            <person name="Gaspin C."/>
            <person name="Lavie M."/>
            <person name="Moisan A."/>
            <person name="Robert C."/>
            <person name="Saurin W."/>
            <person name="Schiex T."/>
            <person name="Siguier P."/>
            <person name="Thebault P."/>
            <person name="Whalen M."/>
            <person name="Wincker P."/>
            <person name="Levy M."/>
            <person name="Weissenbach J."/>
            <person name="Boucher C.A."/>
        </authorList>
    </citation>
    <scope>NUCLEOTIDE SEQUENCE [LARGE SCALE GENOMIC DNA]</scope>
    <source>
        <strain>ATCC BAA-1114 / GMI1000</strain>
    </source>
</reference>
<protein>
    <recommendedName>
        <fullName>Acylphosphatase 2</fullName>
        <ecNumber>3.6.1.7</ecNumber>
    </recommendedName>
    <alternativeName>
        <fullName>Acylphosphate phosphohydrolase 2</fullName>
    </alternativeName>
</protein>
<evidence type="ECO:0000255" key="1">
    <source>
        <dbReference type="PROSITE-ProRule" id="PRU00520"/>
    </source>
</evidence>
<evidence type="ECO:0000305" key="2"/>
<accession>Q8XU24</accession>
<organism>
    <name type="scientific">Ralstonia nicotianae (strain ATCC BAA-1114 / GMI1000)</name>
    <name type="common">Ralstonia solanacearum</name>
    <dbReference type="NCBI Taxonomy" id="267608"/>
    <lineage>
        <taxon>Bacteria</taxon>
        <taxon>Pseudomonadati</taxon>
        <taxon>Pseudomonadota</taxon>
        <taxon>Betaproteobacteria</taxon>
        <taxon>Burkholderiales</taxon>
        <taxon>Burkholderiaceae</taxon>
        <taxon>Ralstonia</taxon>
        <taxon>Ralstonia solanacearum species complex</taxon>
    </lineage>
</organism>
<feature type="chain" id="PRO_0000326777" description="Acylphosphatase 2">
    <location>
        <begin position="1"/>
        <end position="95"/>
    </location>
</feature>
<feature type="domain" description="Acylphosphatase-like" evidence="1">
    <location>
        <begin position="6"/>
        <end position="93"/>
    </location>
</feature>
<feature type="active site" evidence="1">
    <location>
        <position position="21"/>
    </location>
</feature>
<feature type="active site" evidence="1">
    <location>
        <position position="39"/>
    </location>
</feature>
<comment type="catalytic activity">
    <reaction>
        <text>an acyl phosphate + H2O = a carboxylate + phosphate + H(+)</text>
        <dbReference type="Rhea" id="RHEA:14965"/>
        <dbReference type="ChEBI" id="CHEBI:15377"/>
        <dbReference type="ChEBI" id="CHEBI:15378"/>
        <dbReference type="ChEBI" id="CHEBI:29067"/>
        <dbReference type="ChEBI" id="CHEBI:43474"/>
        <dbReference type="ChEBI" id="CHEBI:59918"/>
        <dbReference type="EC" id="3.6.1.7"/>
    </reaction>
</comment>
<comment type="similarity">
    <text evidence="2">Belongs to the acylphosphatase family.</text>
</comment>
<sequence length="95" mass="10385">MSQTLRVIVTVQGRVQGVGYRAACADMARALGLRGWVRNRRDGAVEAFLAGPEPNVLRMQAWMEEGPDLALVTQLRTTPGDIEPLPPGFEVRPTV</sequence>
<keyword id="KW-0378">Hydrolase</keyword>
<keyword id="KW-1185">Reference proteome</keyword>
<dbReference type="EC" id="3.6.1.7"/>
<dbReference type="EMBL" id="AL646052">
    <property type="protein sequence ID" value="CAD16867.1"/>
    <property type="molecule type" value="Genomic_DNA"/>
</dbReference>
<dbReference type="RefSeq" id="WP_011003251.1">
    <property type="nucleotide sequence ID" value="NC_003295.1"/>
</dbReference>
<dbReference type="SMR" id="Q8XU24"/>
<dbReference type="STRING" id="267608.RSc3370"/>
<dbReference type="EnsemblBacteria" id="CAD16867">
    <property type="protein sequence ID" value="CAD16867"/>
    <property type="gene ID" value="RSc3370"/>
</dbReference>
<dbReference type="KEGG" id="rso:RSc3370"/>
<dbReference type="eggNOG" id="COG1254">
    <property type="taxonomic scope" value="Bacteria"/>
</dbReference>
<dbReference type="HOGENOM" id="CLU_141932_3_1_4"/>
<dbReference type="Proteomes" id="UP000001436">
    <property type="component" value="Chromosome"/>
</dbReference>
<dbReference type="GO" id="GO:0003998">
    <property type="term" value="F:acylphosphatase activity"/>
    <property type="evidence" value="ECO:0007669"/>
    <property type="project" value="UniProtKB-EC"/>
</dbReference>
<dbReference type="Gene3D" id="3.30.70.100">
    <property type="match status" value="1"/>
</dbReference>
<dbReference type="InterPro" id="IPR020456">
    <property type="entry name" value="Acylphosphatase"/>
</dbReference>
<dbReference type="InterPro" id="IPR001792">
    <property type="entry name" value="Acylphosphatase-like_dom"/>
</dbReference>
<dbReference type="InterPro" id="IPR036046">
    <property type="entry name" value="Acylphosphatase-like_dom_sf"/>
</dbReference>
<dbReference type="InterPro" id="IPR017968">
    <property type="entry name" value="Acylphosphatase_CS"/>
</dbReference>
<dbReference type="PANTHER" id="PTHR47268">
    <property type="entry name" value="ACYLPHOSPHATASE"/>
    <property type="match status" value="1"/>
</dbReference>
<dbReference type="PANTHER" id="PTHR47268:SF4">
    <property type="entry name" value="ACYLPHOSPHATASE"/>
    <property type="match status" value="1"/>
</dbReference>
<dbReference type="Pfam" id="PF00708">
    <property type="entry name" value="Acylphosphatase"/>
    <property type="match status" value="1"/>
</dbReference>
<dbReference type="PRINTS" id="PR00112">
    <property type="entry name" value="ACYLPHPHTASE"/>
</dbReference>
<dbReference type="SUPFAM" id="SSF54975">
    <property type="entry name" value="Acylphosphatase/BLUF domain-like"/>
    <property type="match status" value="1"/>
</dbReference>
<dbReference type="PROSITE" id="PS00151">
    <property type="entry name" value="ACYLPHOSPHATASE_2"/>
    <property type="match status" value="1"/>
</dbReference>
<dbReference type="PROSITE" id="PS51160">
    <property type="entry name" value="ACYLPHOSPHATASE_3"/>
    <property type="match status" value="1"/>
</dbReference>